<protein>
    <recommendedName>
        <fullName evidence="1">Elongation factor Ts</fullName>
        <shortName evidence="1">EF-Ts</shortName>
    </recommendedName>
</protein>
<reference key="1">
    <citation type="journal article" date="2001" name="Nature">
        <title>Genome sequence of Yersinia pestis, the causative agent of plague.</title>
        <authorList>
            <person name="Parkhill J."/>
            <person name="Wren B.W."/>
            <person name="Thomson N.R."/>
            <person name="Titball R.W."/>
            <person name="Holden M.T.G."/>
            <person name="Prentice M.B."/>
            <person name="Sebaihia M."/>
            <person name="James K.D."/>
            <person name="Churcher C.M."/>
            <person name="Mungall K.L."/>
            <person name="Baker S."/>
            <person name="Basham D."/>
            <person name="Bentley S.D."/>
            <person name="Brooks K."/>
            <person name="Cerdeno-Tarraga A.-M."/>
            <person name="Chillingworth T."/>
            <person name="Cronin A."/>
            <person name="Davies R.M."/>
            <person name="Davis P."/>
            <person name="Dougan G."/>
            <person name="Feltwell T."/>
            <person name="Hamlin N."/>
            <person name="Holroyd S."/>
            <person name="Jagels K."/>
            <person name="Karlyshev A.V."/>
            <person name="Leather S."/>
            <person name="Moule S."/>
            <person name="Oyston P.C.F."/>
            <person name="Quail M.A."/>
            <person name="Rutherford K.M."/>
            <person name="Simmonds M."/>
            <person name="Skelton J."/>
            <person name="Stevens K."/>
            <person name="Whitehead S."/>
            <person name="Barrell B.G."/>
        </authorList>
    </citation>
    <scope>NUCLEOTIDE SEQUENCE [LARGE SCALE GENOMIC DNA]</scope>
    <source>
        <strain>CO-92 / Biovar Orientalis</strain>
    </source>
</reference>
<reference key="2">
    <citation type="journal article" date="2002" name="J. Bacteriol.">
        <title>Genome sequence of Yersinia pestis KIM.</title>
        <authorList>
            <person name="Deng W."/>
            <person name="Burland V."/>
            <person name="Plunkett G. III"/>
            <person name="Boutin A."/>
            <person name="Mayhew G.F."/>
            <person name="Liss P."/>
            <person name="Perna N.T."/>
            <person name="Rose D.J."/>
            <person name="Mau B."/>
            <person name="Zhou S."/>
            <person name="Schwartz D.C."/>
            <person name="Fetherston J.D."/>
            <person name="Lindler L.E."/>
            <person name="Brubaker R.R."/>
            <person name="Plano G.V."/>
            <person name="Straley S.C."/>
            <person name="McDonough K.A."/>
            <person name="Nilles M.L."/>
            <person name="Matson J.S."/>
            <person name="Blattner F.R."/>
            <person name="Perry R.D."/>
        </authorList>
    </citation>
    <scope>NUCLEOTIDE SEQUENCE [LARGE SCALE GENOMIC DNA]</scope>
    <source>
        <strain>KIM10+ / Biovar Mediaevalis</strain>
    </source>
</reference>
<reference key="3">
    <citation type="journal article" date="2004" name="DNA Res.">
        <title>Complete genome sequence of Yersinia pestis strain 91001, an isolate avirulent to humans.</title>
        <authorList>
            <person name="Song Y."/>
            <person name="Tong Z."/>
            <person name="Wang J."/>
            <person name="Wang L."/>
            <person name="Guo Z."/>
            <person name="Han Y."/>
            <person name="Zhang J."/>
            <person name="Pei D."/>
            <person name="Zhou D."/>
            <person name="Qin H."/>
            <person name="Pang X."/>
            <person name="Han Y."/>
            <person name="Zhai J."/>
            <person name="Li M."/>
            <person name="Cui B."/>
            <person name="Qi Z."/>
            <person name="Jin L."/>
            <person name="Dai R."/>
            <person name="Chen F."/>
            <person name="Li S."/>
            <person name="Ye C."/>
            <person name="Du Z."/>
            <person name="Lin W."/>
            <person name="Wang J."/>
            <person name="Yu J."/>
            <person name="Yang H."/>
            <person name="Wang J."/>
            <person name="Huang P."/>
            <person name="Yang R."/>
        </authorList>
    </citation>
    <scope>NUCLEOTIDE SEQUENCE [LARGE SCALE GENOMIC DNA]</scope>
    <source>
        <strain>91001 / Biovar Mediaevalis</strain>
    </source>
</reference>
<feature type="chain" id="PRO_0000161240" description="Elongation factor Ts">
    <location>
        <begin position="1"/>
        <end position="285"/>
    </location>
</feature>
<feature type="region of interest" description="Involved in Mg(2+) ion dislocation from EF-Tu" evidence="1">
    <location>
        <begin position="82"/>
        <end position="85"/>
    </location>
</feature>
<sequence>MVAITAALVKELRERTAAGMMECKKALVEANGDIELAIDNMRKSGQAKAAKKAGRIAAEGIILAKVSADGKYGVILELNCETDFVAKDAGFKAFGEEVINAALAEKIADIDVLKAKFEEQRANLVAKIGENINIRRVAVLEGDILGTYLHGARIGVMVAATGADEELVKHIAMHIAASKPEYVKPDDVPAEVVAREHQIQLDIAIESGKPREIAEKMVEGRMRKFTGEVSLTGQNFVMDPSKTVGDLLKENNADVVNFIRFEVGEGIEKVETDFAAEVAAMSKQS</sequence>
<dbReference type="EMBL" id="AL590842">
    <property type="protein sequence ID" value="CAL19710.1"/>
    <property type="molecule type" value="Genomic_DNA"/>
</dbReference>
<dbReference type="EMBL" id="AE009952">
    <property type="protein sequence ID" value="AAM86686.1"/>
    <property type="molecule type" value="Genomic_DNA"/>
</dbReference>
<dbReference type="EMBL" id="AE017042">
    <property type="protein sequence ID" value="AAS62990.1"/>
    <property type="molecule type" value="Genomic_DNA"/>
</dbReference>
<dbReference type="PIR" id="AD0128">
    <property type="entry name" value="AD0128"/>
</dbReference>
<dbReference type="RefSeq" id="WP_002212132.1">
    <property type="nucleotide sequence ID" value="NZ_WUCM01000044.1"/>
</dbReference>
<dbReference type="RefSeq" id="YP_002346088.1">
    <property type="nucleotide sequence ID" value="NC_003143.1"/>
</dbReference>
<dbReference type="SMR" id="Q8ZH65"/>
<dbReference type="STRING" id="214092.YPO1045"/>
<dbReference type="PaxDb" id="214092-YPO1045"/>
<dbReference type="DNASU" id="1148083"/>
<dbReference type="EnsemblBacteria" id="AAS62990">
    <property type="protein sequence ID" value="AAS62990"/>
    <property type="gene ID" value="YP_2806"/>
</dbReference>
<dbReference type="GeneID" id="96662369"/>
<dbReference type="KEGG" id="ype:YPO1045"/>
<dbReference type="KEGG" id="ypk:y3135"/>
<dbReference type="KEGG" id="ypm:YP_2806"/>
<dbReference type="PATRIC" id="fig|214092.21.peg.1333"/>
<dbReference type="eggNOG" id="COG0264">
    <property type="taxonomic scope" value="Bacteria"/>
</dbReference>
<dbReference type="HOGENOM" id="CLU_047155_0_2_6"/>
<dbReference type="OMA" id="DAGMMDC"/>
<dbReference type="OrthoDB" id="9808348at2"/>
<dbReference type="Proteomes" id="UP000000815">
    <property type="component" value="Chromosome"/>
</dbReference>
<dbReference type="Proteomes" id="UP000001019">
    <property type="component" value="Chromosome"/>
</dbReference>
<dbReference type="Proteomes" id="UP000002490">
    <property type="component" value="Chromosome"/>
</dbReference>
<dbReference type="GO" id="GO:0005737">
    <property type="term" value="C:cytoplasm"/>
    <property type="evidence" value="ECO:0007669"/>
    <property type="project" value="UniProtKB-SubCell"/>
</dbReference>
<dbReference type="GO" id="GO:0003746">
    <property type="term" value="F:translation elongation factor activity"/>
    <property type="evidence" value="ECO:0000318"/>
    <property type="project" value="GO_Central"/>
</dbReference>
<dbReference type="GO" id="GO:0006414">
    <property type="term" value="P:translational elongation"/>
    <property type="evidence" value="ECO:0000318"/>
    <property type="project" value="GO_Central"/>
</dbReference>
<dbReference type="CDD" id="cd14275">
    <property type="entry name" value="UBA_EF-Ts"/>
    <property type="match status" value="1"/>
</dbReference>
<dbReference type="FunFam" id="1.10.286.20:FF:000001">
    <property type="entry name" value="Elongation factor Ts"/>
    <property type="match status" value="1"/>
</dbReference>
<dbReference type="FunFam" id="1.10.8.10:FF:000001">
    <property type="entry name" value="Elongation factor Ts"/>
    <property type="match status" value="1"/>
</dbReference>
<dbReference type="FunFam" id="3.30.479.20:FF:000001">
    <property type="entry name" value="Elongation factor Ts"/>
    <property type="match status" value="1"/>
</dbReference>
<dbReference type="Gene3D" id="1.10.286.20">
    <property type="match status" value="1"/>
</dbReference>
<dbReference type="Gene3D" id="1.10.8.10">
    <property type="entry name" value="DNA helicase RuvA subunit, C-terminal domain"/>
    <property type="match status" value="1"/>
</dbReference>
<dbReference type="Gene3D" id="3.30.479.20">
    <property type="entry name" value="Elongation factor Ts, dimerisation domain"/>
    <property type="match status" value="2"/>
</dbReference>
<dbReference type="HAMAP" id="MF_00050">
    <property type="entry name" value="EF_Ts"/>
    <property type="match status" value="1"/>
</dbReference>
<dbReference type="InterPro" id="IPR036402">
    <property type="entry name" value="EF-Ts_dimer_sf"/>
</dbReference>
<dbReference type="InterPro" id="IPR001816">
    <property type="entry name" value="Transl_elong_EFTs/EF1B"/>
</dbReference>
<dbReference type="InterPro" id="IPR014039">
    <property type="entry name" value="Transl_elong_EFTs/EF1B_dimer"/>
</dbReference>
<dbReference type="InterPro" id="IPR018101">
    <property type="entry name" value="Transl_elong_Ts_CS"/>
</dbReference>
<dbReference type="InterPro" id="IPR009060">
    <property type="entry name" value="UBA-like_sf"/>
</dbReference>
<dbReference type="NCBIfam" id="TIGR00116">
    <property type="entry name" value="tsf"/>
    <property type="match status" value="1"/>
</dbReference>
<dbReference type="PANTHER" id="PTHR11741">
    <property type="entry name" value="ELONGATION FACTOR TS"/>
    <property type="match status" value="1"/>
</dbReference>
<dbReference type="PANTHER" id="PTHR11741:SF0">
    <property type="entry name" value="ELONGATION FACTOR TS, MITOCHONDRIAL"/>
    <property type="match status" value="1"/>
</dbReference>
<dbReference type="Pfam" id="PF00889">
    <property type="entry name" value="EF_TS"/>
    <property type="match status" value="1"/>
</dbReference>
<dbReference type="SUPFAM" id="SSF54713">
    <property type="entry name" value="Elongation factor Ts (EF-Ts), dimerisation domain"/>
    <property type="match status" value="2"/>
</dbReference>
<dbReference type="SUPFAM" id="SSF46934">
    <property type="entry name" value="UBA-like"/>
    <property type="match status" value="1"/>
</dbReference>
<dbReference type="PROSITE" id="PS01127">
    <property type="entry name" value="EF_TS_2"/>
    <property type="match status" value="1"/>
</dbReference>
<gene>
    <name evidence="1" type="primary">tsf</name>
    <name type="ordered locus">YPO1045</name>
    <name type="ordered locus">y3135</name>
    <name type="ordered locus">YP_2806</name>
</gene>
<proteinExistence type="inferred from homology"/>
<accession>Q8ZH65</accession>
<accession>Q0WI00</accession>
<organism>
    <name type="scientific">Yersinia pestis</name>
    <dbReference type="NCBI Taxonomy" id="632"/>
    <lineage>
        <taxon>Bacteria</taxon>
        <taxon>Pseudomonadati</taxon>
        <taxon>Pseudomonadota</taxon>
        <taxon>Gammaproteobacteria</taxon>
        <taxon>Enterobacterales</taxon>
        <taxon>Yersiniaceae</taxon>
        <taxon>Yersinia</taxon>
    </lineage>
</organism>
<keyword id="KW-0963">Cytoplasm</keyword>
<keyword id="KW-0251">Elongation factor</keyword>
<keyword id="KW-0648">Protein biosynthesis</keyword>
<keyword id="KW-1185">Reference proteome</keyword>
<comment type="function">
    <text evidence="1">Associates with the EF-Tu.GDP complex and induces the exchange of GDP to GTP. It remains bound to the aminoacyl-tRNA.EF-Tu.GTP complex up to the GTP hydrolysis stage on the ribosome.</text>
</comment>
<comment type="subcellular location">
    <subcellularLocation>
        <location evidence="1">Cytoplasm</location>
    </subcellularLocation>
</comment>
<comment type="similarity">
    <text evidence="1">Belongs to the EF-Ts family.</text>
</comment>
<name>EFTS_YERPE</name>
<evidence type="ECO:0000255" key="1">
    <source>
        <dbReference type="HAMAP-Rule" id="MF_00050"/>
    </source>
</evidence>